<sequence>MNIIEIIELKKNKKKLSQDQINFCISGLVNKSIPDYQISALLMAIWFNGLDDNELYFLTKAMIDSGKIYKFHPEYKKILIDKHSTGGIGDKVSIALRPILVSFDLGVAKLSGRGLGFTGGTIDKLESINVNTDIDLKNSKKILNIANMFIVGQTNDIVPADKLLYALRDVTGTVDSLPLIAASILSKKFALESDYIFIDIKYGQGAFCHDIETAKKISNIMKNLAKKFKRKVYFVLSDMNEVLGNTVGNAIEVKEAIDFLKNNSDVGTYFKKLMFDLVTLILLKTKKCKTKKEAKEKINYVLENKIAFNNFCNWIELQNGNIAKIKNDTFFKPKYWTNIAAWKSGKISYKSIIELAEIGVDLGSGRRKKEDKIDFQAGIYLHAKSNEKIKIKDKILTLYSSKPIKQDLIDKAKKIIKIS</sequence>
<protein>
    <recommendedName>
        <fullName>Thymidine phosphorylase</fullName>
        <ecNumber>2.4.2.4</ecNumber>
    </recommendedName>
    <alternativeName>
        <fullName>TdRPase</fullName>
    </alternativeName>
</protein>
<evidence type="ECO:0000250" key="1"/>
<evidence type="ECO:0000305" key="2"/>
<organism>
    <name type="scientific">Mycoplasmoides pirum</name>
    <name type="common">Mycoplasma pirum</name>
    <dbReference type="NCBI Taxonomy" id="2122"/>
    <lineage>
        <taxon>Bacteria</taxon>
        <taxon>Bacillati</taxon>
        <taxon>Mycoplasmatota</taxon>
        <taxon>Mycoplasmoidales</taxon>
        <taxon>Mycoplasmoidaceae</taxon>
        <taxon>Mycoplasmoides</taxon>
    </lineage>
</organism>
<proteinExistence type="inferred from homology"/>
<comment type="function">
    <text>The enzymes which catalyze the reversible phosphorolysis of pyrimidine nucleosides are involved in the degradation of these compounds and in their utilization as carbon and energy sources, or in the rescue of pyrimidine bases for nucleotide synthesis.</text>
</comment>
<comment type="catalytic activity">
    <reaction>
        <text>thymidine + phosphate = 2-deoxy-alpha-D-ribose 1-phosphate + thymine</text>
        <dbReference type="Rhea" id="RHEA:16037"/>
        <dbReference type="ChEBI" id="CHEBI:17748"/>
        <dbReference type="ChEBI" id="CHEBI:17821"/>
        <dbReference type="ChEBI" id="CHEBI:43474"/>
        <dbReference type="ChEBI" id="CHEBI:57259"/>
        <dbReference type="EC" id="2.4.2.4"/>
    </reaction>
</comment>
<comment type="subunit">
    <text evidence="1">Homodimer.</text>
</comment>
<comment type="similarity">
    <text evidence="2">Belongs to the thymidine/pyrimidine-nucleoside phosphorylase family.</text>
</comment>
<name>TYPH_MYCPI</name>
<reference key="1">
    <citation type="journal article" date="1993" name="J. Bacteriol.">
        <title>Identification of Mycoplasma pirum genes involved in the salvage pathways for nucleosides.</title>
        <authorList>
            <person name="Tham T.N."/>
            <person name="Ferris S."/>
            <person name="Kovacic R."/>
            <person name="Montagnier L."/>
            <person name="Blanchard A."/>
        </authorList>
    </citation>
    <scope>NUCLEOTIDE SEQUENCE [GENOMIC DNA]</scope>
    <source>
        <strain>BER</strain>
    </source>
</reference>
<dbReference type="EC" id="2.4.2.4"/>
<dbReference type="EMBL" id="L13289">
    <property type="protein sequence ID" value="AAA25432.1"/>
    <property type="molecule type" value="Genomic_DNA"/>
</dbReference>
<dbReference type="PIR" id="C53312">
    <property type="entry name" value="C53312"/>
</dbReference>
<dbReference type="SMR" id="P47717"/>
<dbReference type="GO" id="GO:0005829">
    <property type="term" value="C:cytosol"/>
    <property type="evidence" value="ECO:0007669"/>
    <property type="project" value="TreeGrafter"/>
</dbReference>
<dbReference type="GO" id="GO:0004645">
    <property type="term" value="F:1,4-alpha-oligoglucan phosphorylase activity"/>
    <property type="evidence" value="ECO:0007669"/>
    <property type="project" value="InterPro"/>
</dbReference>
<dbReference type="GO" id="GO:0009032">
    <property type="term" value="F:thymidine phosphorylase activity"/>
    <property type="evidence" value="ECO:0000250"/>
    <property type="project" value="CAFA"/>
</dbReference>
<dbReference type="GO" id="GO:0006206">
    <property type="term" value="P:pyrimidine nucleobase metabolic process"/>
    <property type="evidence" value="ECO:0007669"/>
    <property type="project" value="InterPro"/>
</dbReference>
<dbReference type="GO" id="GO:0006213">
    <property type="term" value="P:pyrimidine nucleoside metabolic process"/>
    <property type="evidence" value="ECO:0000250"/>
    <property type="project" value="CAFA"/>
</dbReference>
<dbReference type="FunFam" id="3.40.1030.10:FF:000003">
    <property type="entry name" value="Pyrimidine-nucleoside phosphorylase"/>
    <property type="match status" value="1"/>
</dbReference>
<dbReference type="FunFam" id="3.90.1170.30:FF:000007">
    <property type="entry name" value="Thymidine phosphorylase"/>
    <property type="match status" value="1"/>
</dbReference>
<dbReference type="Gene3D" id="3.40.1030.10">
    <property type="entry name" value="Nucleoside phosphorylase/phosphoribosyltransferase catalytic domain"/>
    <property type="match status" value="1"/>
</dbReference>
<dbReference type="Gene3D" id="3.90.1170.30">
    <property type="entry name" value="Pyrimidine nucleoside phosphorylase-like, C-terminal domain"/>
    <property type="match status" value="1"/>
</dbReference>
<dbReference type="Gene3D" id="1.20.970.10">
    <property type="entry name" value="Transferase, Pyrimidine Nucleoside Phosphorylase, Chain C"/>
    <property type="match status" value="1"/>
</dbReference>
<dbReference type="InterPro" id="IPR000312">
    <property type="entry name" value="Glycosyl_Trfase_fam3"/>
</dbReference>
<dbReference type="InterPro" id="IPR017459">
    <property type="entry name" value="Glycosyl_Trfase_fam3_N_dom"/>
</dbReference>
<dbReference type="InterPro" id="IPR036320">
    <property type="entry name" value="Glycosyl_Trfase_fam3_N_dom_sf"/>
</dbReference>
<dbReference type="InterPro" id="IPR035902">
    <property type="entry name" value="Nuc_phospho_transferase"/>
</dbReference>
<dbReference type="InterPro" id="IPR036566">
    <property type="entry name" value="PYNP-like_C_sf"/>
</dbReference>
<dbReference type="InterPro" id="IPR013102">
    <property type="entry name" value="PYNP_C"/>
</dbReference>
<dbReference type="InterPro" id="IPR018090">
    <property type="entry name" value="Pyrmidine_PPas_bac/euk"/>
</dbReference>
<dbReference type="InterPro" id="IPR017872">
    <property type="entry name" value="Pyrmidine_PPase_CS"/>
</dbReference>
<dbReference type="InterPro" id="IPR000053">
    <property type="entry name" value="Thymidine/pyrmidine_PPase"/>
</dbReference>
<dbReference type="NCBIfam" id="NF004490">
    <property type="entry name" value="PRK05820.1"/>
    <property type="match status" value="1"/>
</dbReference>
<dbReference type="NCBIfam" id="TIGR02644">
    <property type="entry name" value="Y_phosphoryl"/>
    <property type="match status" value="1"/>
</dbReference>
<dbReference type="PANTHER" id="PTHR10515">
    <property type="entry name" value="THYMIDINE PHOSPHORYLASE"/>
    <property type="match status" value="1"/>
</dbReference>
<dbReference type="PANTHER" id="PTHR10515:SF0">
    <property type="entry name" value="THYMIDINE PHOSPHORYLASE"/>
    <property type="match status" value="1"/>
</dbReference>
<dbReference type="Pfam" id="PF02885">
    <property type="entry name" value="Glycos_trans_3N"/>
    <property type="match status" value="1"/>
</dbReference>
<dbReference type="Pfam" id="PF00591">
    <property type="entry name" value="Glycos_transf_3"/>
    <property type="match status" value="1"/>
</dbReference>
<dbReference type="Pfam" id="PF07831">
    <property type="entry name" value="PYNP_C"/>
    <property type="match status" value="1"/>
</dbReference>
<dbReference type="PIRSF" id="PIRSF000478">
    <property type="entry name" value="TP_PyNP"/>
    <property type="match status" value="1"/>
</dbReference>
<dbReference type="SMART" id="SM00941">
    <property type="entry name" value="PYNP_C"/>
    <property type="match status" value="1"/>
</dbReference>
<dbReference type="SUPFAM" id="SSF52418">
    <property type="entry name" value="Nucleoside phosphorylase/phosphoribosyltransferase catalytic domain"/>
    <property type="match status" value="1"/>
</dbReference>
<dbReference type="SUPFAM" id="SSF47648">
    <property type="entry name" value="Nucleoside phosphorylase/phosphoribosyltransferase N-terminal domain"/>
    <property type="match status" value="1"/>
</dbReference>
<dbReference type="SUPFAM" id="SSF54680">
    <property type="entry name" value="Pyrimidine nucleoside phosphorylase C-terminal domain"/>
    <property type="match status" value="1"/>
</dbReference>
<dbReference type="PROSITE" id="PS00647">
    <property type="entry name" value="THYMID_PHOSPHORYLASE"/>
    <property type="match status" value="1"/>
</dbReference>
<feature type="chain" id="PRO_0000059080" description="Thymidine phosphorylase">
    <location>
        <begin position="1"/>
        <end position="419"/>
    </location>
</feature>
<gene>
    <name type="primary">deoA</name>
</gene>
<accession>P47717</accession>
<keyword id="KW-0328">Glycosyltransferase</keyword>
<keyword id="KW-0808">Transferase</keyword>